<reference key="1">
    <citation type="journal article" date="1995" name="Science">
        <title>Whole-genome random sequencing and assembly of Haemophilus influenzae Rd.</title>
        <authorList>
            <person name="Fleischmann R.D."/>
            <person name="Adams M.D."/>
            <person name="White O."/>
            <person name="Clayton R.A."/>
            <person name="Kirkness E.F."/>
            <person name="Kerlavage A.R."/>
            <person name="Bult C.J."/>
            <person name="Tomb J.-F."/>
            <person name="Dougherty B.A."/>
            <person name="Merrick J.M."/>
            <person name="McKenney K."/>
            <person name="Sutton G.G."/>
            <person name="FitzHugh W."/>
            <person name="Fields C.A."/>
            <person name="Gocayne J.D."/>
            <person name="Scott J.D."/>
            <person name="Shirley R."/>
            <person name="Liu L.-I."/>
            <person name="Glodek A."/>
            <person name="Kelley J.M."/>
            <person name="Weidman J.F."/>
            <person name="Phillips C.A."/>
            <person name="Spriggs T."/>
            <person name="Hedblom E."/>
            <person name="Cotton M.D."/>
            <person name="Utterback T.R."/>
            <person name="Hanna M.C."/>
            <person name="Nguyen D.T."/>
            <person name="Saudek D.M."/>
            <person name="Brandon R.C."/>
            <person name="Fine L.D."/>
            <person name="Fritchman J.L."/>
            <person name="Fuhrmann J.L."/>
            <person name="Geoghagen N.S.M."/>
            <person name="Gnehm C.L."/>
            <person name="McDonald L.A."/>
            <person name="Small K.V."/>
            <person name="Fraser C.M."/>
            <person name="Smith H.O."/>
            <person name="Venter J.C."/>
        </authorList>
    </citation>
    <scope>NUCLEOTIDE SEQUENCE [LARGE SCALE GENOMIC DNA]</scope>
    <source>
        <strain>ATCC 51907 / DSM 11121 / KW20 / Rd</strain>
    </source>
</reference>
<feature type="chain" id="PRO_0000187290" description="Pyrroline-5-carboxylate reductase">
    <location>
        <begin position="1"/>
        <end position="271"/>
    </location>
</feature>
<evidence type="ECO:0000255" key="1">
    <source>
        <dbReference type="HAMAP-Rule" id="MF_01925"/>
    </source>
</evidence>
<name>P5CR_HAEIN</name>
<dbReference type="EC" id="1.5.1.2" evidence="1"/>
<dbReference type="EMBL" id="L42023">
    <property type="protein sequence ID" value="AAC21972.1"/>
    <property type="molecule type" value="Genomic_DNA"/>
</dbReference>
<dbReference type="PIR" id="I64060">
    <property type="entry name" value="I64060"/>
</dbReference>
<dbReference type="RefSeq" id="NP_438474.1">
    <property type="nucleotide sequence ID" value="NC_000907.1"/>
</dbReference>
<dbReference type="SMR" id="P43869"/>
<dbReference type="STRING" id="71421.HI_0307"/>
<dbReference type="EnsemblBacteria" id="AAC21972">
    <property type="protein sequence ID" value="AAC21972"/>
    <property type="gene ID" value="HI_0307"/>
</dbReference>
<dbReference type="KEGG" id="hin:HI_0307"/>
<dbReference type="PATRIC" id="fig|71421.8.peg.324"/>
<dbReference type="eggNOG" id="COG0345">
    <property type="taxonomic scope" value="Bacteria"/>
</dbReference>
<dbReference type="HOGENOM" id="CLU_042344_0_1_6"/>
<dbReference type="OrthoDB" id="9805754at2"/>
<dbReference type="PhylomeDB" id="P43869"/>
<dbReference type="BioCyc" id="HINF71421:G1GJ1-325-MONOMER"/>
<dbReference type="UniPathway" id="UPA00098">
    <property type="reaction ID" value="UER00361"/>
</dbReference>
<dbReference type="Proteomes" id="UP000000579">
    <property type="component" value="Chromosome"/>
</dbReference>
<dbReference type="GO" id="GO:0005737">
    <property type="term" value="C:cytoplasm"/>
    <property type="evidence" value="ECO:0007669"/>
    <property type="project" value="UniProtKB-SubCell"/>
</dbReference>
<dbReference type="GO" id="GO:0004735">
    <property type="term" value="F:pyrroline-5-carboxylate reductase activity"/>
    <property type="evidence" value="ECO:0000318"/>
    <property type="project" value="GO_Central"/>
</dbReference>
<dbReference type="GO" id="GO:0055129">
    <property type="term" value="P:L-proline biosynthetic process"/>
    <property type="evidence" value="ECO:0000318"/>
    <property type="project" value="GO_Central"/>
</dbReference>
<dbReference type="FunFam" id="1.10.3730.10:FF:000001">
    <property type="entry name" value="Pyrroline-5-carboxylate reductase"/>
    <property type="match status" value="1"/>
</dbReference>
<dbReference type="FunFam" id="3.40.50.720:FF:000105">
    <property type="entry name" value="Pyrroline-5-carboxylate reductase"/>
    <property type="match status" value="1"/>
</dbReference>
<dbReference type="Gene3D" id="3.40.50.720">
    <property type="entry name" value="NAD(P)-binding Rossmann-like Domain"/>
    <property type="match status" value="1"/>
</dbReference>
<dbReference type="Gene3D" id="1.10.3730.10">
    <property type="entry name" value="ProC C-terminal domain-like"/>
    <property type="match status" value="1"/>
</dbReference>
<dbReference type="HAMAP" id="MF_01925">
    <property type="entry name" value="P5C_reductase"/>
    <property type="match status" value="1"/>
</dbReference>
<dbReference type="InterPro" id="IPR008927">
    <property type="entry name" value="6-PGluconate_DH-like_C_sf"/>
</dbReference>
<dbReference type="InterPro" id="IPR036291">
    <property type="entry name" value="NAD(P)-bd_dom_sf"/>
</dbReference>
<dbReference type="InterPro" id="IPR028939">
    <property type="entry name" value="P5C_Rdtase_cat_N"/>
</dbReference>
<dbReference type="InterPro" id="IPR053790">
    <property type="entry name" value="P5CR-like_CS"/>
</dbReference>
<dbReference type="InterPro" id="IPR029036">
    <property type="entry name" value="P5CR_dimer"/>
</dbReference>
<dbReference type="InterPro" id="IPR000304">
    <property type="entry name" value="Pyrroline-COOH_reductase"/>
</dbReference>
<dbReference type="NCBIfam" id="TIGR00112">
    <property type="entry name" value="proC"/>
    <property type="match status" value="1"/>
</dbReference>
<dbReference type="PANTHER" id="PTHR11645">
    <property type="entry name" value="PYRROLINE-5-CARBOXYLATE REDUCTASE"/>
    <property type="match status" value="1"/>
</dbReference>
<dbReference type="PANTHER" id="PTHR11645:SF0">
    <property type="entry name" value="PYRROLINE-5-CARBOXYLATE REDUCTASE 3"/>
    <property type="match status" value="1"/>
</dbReference>
<dbReference type="Pfam" id="PF03807">
    <property type="entry name" value="F420_oxidored"/>
    <property type="match status" value="1"/>
</dbReference>
<dbReference type="Pfam" id="PF14748">
    <property type="entry name" value="P5CR_dimer"/>
    <property type="match status" value="1"/>
</dbReference>
<dbReference type="PIRSF" id="PIRSF000193">
    <property type="entry name" value="Pyrrol-5-carb_rd"/>
    <property type="match status" value="1"/>
</dbReference>
<dbReference type="SUPFAM" id="SSF48179">
    <property type="entry name" value="6-phosphogluconate dehydrogenase C-terminal domain-like"/>
    <property type="match status" value="1"/>
</dbReference>
<dbReference type="SUPFAM" id="SSF51735">
    <property type="entry name" value="NAD(P)-binding Rossmann-fold domains"/>
    <property type="match status" value="1"/>
</dbReference>
<dbReference type="PROSITE" id="PS00521">
    <property type="entry name" value="P5CR"/>
    <property type="match status" value="1"/>
</dbReference>
<organism>
    <name type="scientific">Haemophilus influenzae (strain ATCC 51907 / DSM 11121 / KW20 / Rd)</name>
    <dbReference type="NCBI Taxonomy" id="71421"/>
    <lineage>
        <taxon>Bacteria</taxon>
        <taxon>Pseudomonadati</taxon>
        <taxon>Pseudomonadota</taxon>
        <taxon>Gammaproteobacteria</taxon>
        <taxon>Pasteurellales</taxon>
        <taxon>Pasteurellaceae</taxon>
        <taxon>Haemophilus</taxon>
    </lineage>
</organism>
<proteinExistence type="inferred from homology"/>
<sequence length="271" mass="29124">MQHKLIAFIGGGNMAQAIILGLLKQGYPAEQIIVNDPNEEKRAFFANLDVATSENNVGSAIKAEVVLLAVKPQMMAEVCSPLSAVDFSDKLLISIAAGISTERLNALIPSVKSIVRVMPNTPALVGEGMAGLFAPKNTSENYRTFAQDLLGAVGRTVWVNDETQMHAVTAASGSSPAYFFLMLEAMQKALIKMNIDEKTARELVQQSMLGAAKMVTENPQIALSTLRENVTSKGGTTAAALAVFDAQHFNQTIEQAMQACLSRSQEMETLF</sequence>
<keyword id="KW-0028">Amino-acid biosynthesis</keyword>
<keyword id="KW-0963">Cytoplasm</keyword>
<keyword id="KW-0521">NADP</keyword>
<keyword id="KW-0560">Oxidoreductase</keyword>
<keyword id="KW-0641">Proline biosynthesis</keyword>
<keyword id="KW-1185">Reference proteome</keyword>
<protein>
    <recommendedName>
        <fullName evidence="1">Pyrroline-5-carboxylate reductase</fullName>
        <shortName evidence="1">P5C reductase</shortName>
        <shortName evidence="1">P5CR</shortName>
        <ecNumber evidence="1">1.5.1.2</ecNumber>
    </recommendedName>
    <alternativeName>
        <fullName evidence="1">PCA reductase</fullName>
    </alternativeName>
</protein>
<accession>P43869</accession>
<gene>
    <name evidence="1" type="primary">proC</name>
    <name type="ordered locus">HI_0307</name>
</gene>
<comment type="function">
    <text evidence="1">Catalyzes the reduction of 1-pyrroline-5-carboxylate (PCA) to L-proline.</text>
</comment>
<comment type="catalytic activity">
    <reaction evidence="1">
        <text>L-proline + NADP(+) = (S)-1-pyrroline-5-carboxylate + NADPH + 2 H(+)</text>
        <dbReference type="Rhea" id="RHEA:14109"/>
        <dbReference type="ChEBI" id="CHEBI:15378"/>
        <dbReference type="ChEBI" id="CHEBI:17388"/>
        <dbReference type="ChEBI" id="CHEBI:57783"/>
        <dbReference type="ChEBI" id="CHEBI:58349"/>
        <dbReference type="ChEBI" id="CHEBI:60039"/>
        <dbReference type="EC" id="1.5.1.2"/>
    </reaction>
</comment>
<comment type="catalytic activity">
    <reaction evidence="1">
        <text>L-proline + NAD(+) = (S)-1-pyrroline-5-carboxylate + NADH + 2 H(+)</text>
        <dbReference type="Rhea" id="RHEA:14105"/>
        <dbReference type="ChEBI" id="CHEBI:15378"/>
        <dbReference type="ChEBI" id="CHEBI:17388"/>
        <dbReference type="ChEBI" id="CHEBI:57540"/>
        <dbReference type="ChEBI" id="CHEBI:57945"/>
        <dbReference type="ChEBI" id="CHEBI:60039"/>
        <dbReference type="EC" id="1.5.1.2"/>
    </reaction>
</comment>
<comment type="pathway">
    <text evidence="1">Amino-acid biosynthesis; L-proline biosynthesis; L-proline from L-glutamate 5-semialdehyde: step 1/1.</text>
</comment>
<comment type="subcellular location">
    <subcellularLocation>
        <location evidence="1">Cytoplasm</location>
    </subcellularLocation>
</comment>
<comment type="similarity">
    <text evidence="1">Belongs to the pyrroline-5-carboxylate reductase family.</text>
</comment>